<accession>A5VU90</accession>
<dbReference type="EMBL" id="CP000709">
    <property type="protein sequence ID" value="ABQ62416.1"/>
    <property type="molecule type" value="Genomic_DNA"/>
</dbReference>
<dbReference type="RefSeq" id="WP_004681739.1">
    <property type="nucleotide sequence ID" value="NC_009504.1"/>
</dbReference>
<dbReference type="SMR" id="A5VU90"/>
<dbReference type="KEGG" id="bov:BOV_A0351"/>
<dbReference type="HOGENOM" id="CLU_036879_1_2_5"/>
<dbReference type="Proteomes" id="UP000006383">
    <property type="component" value="Chromosome II"/>
</dbReference>
<dbReference type="GO" id="GO:0005886">
    <property type="term" value="C:plasma membrane"/>
    <property type="evidence" value="ECO:0007669"/>
    <property type="project" value="UniProtKB-SubCell"/>
</dbReference>
<dbReference type="GO" id="GO:0015833">
    <property type="term" value="P:peptide transport"/>
    <property type="evidence" value="ECO:0007669"/>
    <property type="project" value="UniProtKB-KW"/>
</dbReference>
<dbReference type="GO" id="GO:0015031">
    <property type="term" value="P:protein transport"/>
    <property type="evidence" value="ECO:0007669"/>
    <property type="project" value="UniProtKB-KW"/>
</dbReference>
<dbReference type="GO" id="GO:0055085">
    <property type="term" value="P:transmembrane transport"/>
    <property type="evidence" value="ECO:0007669"/>
    <property type="project" value="InterPro"/>
</dbReference>
<dbReference type="CDD" id="cd06261">
    <property type="entry name" value="TM_PBP2"/>
    <property type="match status" value="1"/>
</dbReference>
<dbReference type="Gene3D" id="1.10.3720.10">
    <property type="entry name" value="MetI-like"/>
    <property type="match status" value="1"/>
</dbReference>
<dbReference type="InterPro" id="IPR045621">
    <property type="entry name" value="BPD_transp_1_N"/>
</dbReference>
<dbReference type="InterPro" id="IPR000515">
    <property type="entry name" value="MetI-like"/>
</dbReference>
<dbReference type="InterPro" id="IPR035906">
    <property type="entry name" value="MetI-like_sf"/>
</dbReference>
<dbReference type="PANTHER" id="PTHR43163">
    <property type="entry name" value="DIPEPTIDE TRANSPORT SYSTEM PERMEASE PROTEIN DPPB-RELATED"/>
    <property type="match status" value="1"/>
</dbReference>
<dbReference type="PANTHER" id="PTHR43163:SF6">
    <property type="entry name" value="DIPEPTIDE TRANSPORT SYSTEM PERMEASE PROTEIN DPPB-RELATED"/>
    <property type="match status" value="1"/>
</dbReference>
<dbReference type="Pfam" id="PF00528">
    <property type="entry name" value="BPD_transp_1"/>
    <property type="match status" value="1"/>
</dbReference>
<dbReference type="Pfam" id="PF19300">
    <property type="entry name" value="BPD_transp_1_N"/>
    <property type="match status" value="1"/>
</dbReference>
<dbReference type="SUPFAM" id="SSF161098">
    <property type="entry name" value="MetI-like"/>
    <property type="match status" value="1"/>
</dbReference>
<dbReference type="PROSITE" id="PS50928">
    <property type="entry name" value="ABC_TM1"/>
    <property type="match status" value="1"/>
</dbReference>
<reference key="1">
    <citation type="journal article" date="2009" name="PLoS ONE">
        <title>Genome degradation in Brucella ovis corresponds with narrowing of its host range and tissue tropism.</title>
        <authorList>
            <person name="Tsolis R.M."/>
            <person name="Seshadri R."/>
            <person name="Santos R.L."/>
            <person name="Sangari F.J."/>
            <person name="Lobo J.M."/>
            <person name="de Jong M.F."/>
            <person name="Ren Q."/>
            <person name="Myers G."/>
            <person name="Brinkac L.M."/>
            <person name="Nelson W.C."/>
            <person name="Deboy R.T."/>
            <person name="Angiuoli S."/>
            <person name="Khouri H."/>
            <person name="Dimitrov G."/>
            <person name="Robinson J.R."/>
            <person name="Mulligan S."/>
            <person name="Walker R.L."/>
            <person name="Elzer P.E."/>
            <person name="Hassan K.A."/>
            <person name="Paulsen I.T."/>
        </authorList>
    </citation>
    <scope>NUCLEOTIDE SEQUENCE [LARGE SCALE GENOMIC DNA]</scope>
    <source>
        <strain>ATCC 25840 / 63/290 / NCTC 10512</strain>
    </source>
</reference>
<proteinExistence type="inferred from homology"/>
<sequence length="319" mass="34426">MLRYCLHRLLIGLGMLLALTILIFVLLQLTPGDPIDAYINPNVAMTQAEMDALRAQLGLDRPLPVQYLAWLGQAVQGNLGHSLQRFNETVSGLIASRIGPTLLLMAAGLAIAIVIGVTTGIISAVRRNSFPDYSFSVLALLGISSPAFLTALLGLYVFSVRLKWAPSGGMLTPATDFSIPDLLRHLALPALVLSIGHAALIMRYMRSSMLETLNQDYVRTARAKGVREFWVVVKHTLRNAMLPVVTLIGSTIGLAVGGAIFIESVFNWPGMGLLLINAVETRDYPVIMGATLVIGACVIIVNILTDLAYAVIDPRIKVT</sequence>
<organism>
    <name type="scientific">Brucella ovis (strain ATCC 25840 / 63/290 / NCTC 10512)</name>
    <dbReference type="NCBI Taxonomy" id="444178"/>
    <lineage>
        <taxon>Bacteria</taxon>
        <taxon>Pseudomonadati</taxon>
        <taxon>Pseudomonadota</taxon>
        <taxon>Alphaproteobacteria</taxon>
        <taxon>Hyphomicrobiales</taxon>
        <taxon>Brucellaceae</taxon>
        <taxon>Brucella/Ochrobactrum group</taxon>
        <taxon>Brucella</taxon>
    </lineage>
</organism>
<gene>
    <name type="ordered locus">BOV_A0351</name>
</gene>
<comment type="function">
    <text evidence="1">Probably part of an ABC transporter complex that could be involved in peptide import. Probably responsible for the translocation of the substrate across the membrane (By similarity).</text>
</comment>
<comment type="subunit">
    <text evidence="3">The complex is composed of two ATP-binding proteins (BOV_A0347 and BOV_A0348), two transmembrane proteins (BOV_A0350 and BOV_A0351) and a solute-binding protein (BOV_A0352).</text>
</comment>
<comment type="subcellular location">
    <subcellularLocation>
        <location evidence="3">Cell inner membrane</location>
        <topology evidence="2">Multi-pass membrane protein</topology>
    </subcellularLocation>
</comment>
<comment type="similarity">
    <text evidence="3">Belongs to the binding-protein-dependent transport system permease family.</text>
</comment>
<name>Y2551_BRUO2</name>
<protein>
    <recommendedName>
        <fullName>Putative peptide permease protein BOV_A0351</fullName>
    </recommendedName>
</protein>
<feature type="chain" id="PRO_0000328713" description="Putative peptide permease protein BOV_A0351">
    <location>
        <begin position="1"/>
        <end position="319"/>
    </location>
</feature>
<feature type="transmembrane region" description="Helical" evidence="2">
    <location>
        <begin position="9"/>
        <end position="29"/>
    </location>
</feature>
<feature type="transmembrane region" description="Helical" evidence="2">
    <location>
        <begin position="102"/>
        <end position="122"/>
    </location>
</feature>
<feature type="transmembrane region" description="Helical" evidence="2">
    <location>
        <begin position="138"/>
        <end position="158"/>
    </location>
</feature>
<feature type="transmembrane region" description="Helical" evidence="2">
    <location>
        <begin position="182"/>
        <end position="202"/>
    </location>
</feature>
<feature type="transmembrane region" description="Helical" evidence="2">
    <location>
        <begin position="242"/>
        <end position="262"/>
    </location>
</feature>
<feature type="transmembrane region" description="Helical" evidence="2">
    <location>
        <begin position="284"/>
        <end position="304"/>
    </location>
</feature>
<feature type="domain" description="ABC transmembrane type-1" evidence="2">
    <location>
        <begin position="98"/>
        <end position="305"/>
    </location>
</feature>
<keyword id="KW-0997">Cell inner membrane</keyword>
<keyword id="KW-1003">Cell membrane</keyword>
<keyword id="KW-0472">Membrane</keyword>
<keyword id="KW-0571">Peptide transport</keyword>
<keyword id="KW-0653">Protein transport</keyword>
<keyword id="KW-0812">Transmembrane</keyword>
<keyword id="KW-1133">Transmembrane helix</keyword>
<keyword id="KW-0813">Transport</keyword>
<evidence type="ECO:0000250" key="1"/>
<evidence type="ECO:0000255" key="2">
    <source>
        <dbReference type="PROSITE-ProRule" id="PRU00441"/>
    </source>
</evidence>
<evidence type="ECO:0000305" key="3"/>